<accession>Q4L815</accession>
<reference key="1">
    <citation type="journal article" date="2005" name="J. Bacteriol.">
        <title>Whole-genome sequencing of Staphylococcus haemolyticus uncovers the extreme plasticity of its genome and the evolution of human-colonizing staphylococcal species.</title>
        <authorList>
            <person name="Takeuchi F."/>
            <person name="Watanabe S."/>
            <person name="Baba T."/>
            <person name="Yuzawa H."/>
            <person name="Ito T."/>
            <person name="Morimoto Y."/>
            <person name="Kuroda M."/>
            <person name="Cui L."/>
            <person name="Takahashi M."/>
            <person name="Ankai A."/>
            <person name="Baba S."/>
            <person name="Fukui S."/>
            <person name="Lee J.C."/>
            <person name="Hiramatsu K."/>
        </authorList>
    </citation>
    <scope>NUCLEOTIDE SEQUENCE [LARGE SCALE GENOMIC DNA]</scope>
    <source>
        <strain>JCSC1435</strain>
    </source>
</reference>
<evidence type="ECO:0000255" key="1">
    <source>
        <dbReference type="HAMAP-Rule" id="MF_00091"/>
    </source>
</evidence>
<organism>
    <name type="scientific">Staphylococcus haemolyticus (strain JCSC1435)</name>
    <dbReference type="NCBI Taxonomy" id="279808"/>
    <lineage>
        <taxon>Bacteria</taxon>
        <taxon>Bacillati</taxon>
        <taxon>Bacillota</taxon>
        <taxon>Bacilli</taxon>
        <taxon>Bacillales</taxon>
        <taxon>Staphylococcaceae</taxon>
        <taxon>Staphylococcus</taxon>
    </lineage>
</organism>
<gene>
    <name evidence="1" type="primary">luxS</name>
    <name type="ordered locus">SH0901</name>
</gene>
<keyword id="KW-0071">Autoinducer synthesis</keyword>
<keyword id="KW-0408">Iron</keyword>
<keyword id="KW-0456">Lyase</keyword>
<keyword id="KW-0479">Metal-binding</keyword>
<keyword id="KW-0673">Quorum sensing</keyword>
<sequence>MTKMNVESFNLDHTKVVAPFVRLAGTMEGLNGDVIKKYDIRFKQPNKEHMEMPGLHSLEHLMAENIRNHTDKVVDLSPMGCQTGFYVSFINHDDYEDVLNIIEKTLNDVLEATEVPACNEVQCGWAASHSLEGAKEIAQAFLDKRNQWSDIFGEGK</sequence>
<proteinExistence type="inferred from homology"/>
<feature type="chain" id="PRO_0000298038" description="S-ribosylhomocysteine lyase">
    <location>
        <begin position="1"/>
        <end position="156"/>
    </location>
</feature>
<feature type="binding site" evidence="1">
    <location>
        <position position="56"/>
    </location>
    <ligand>
        <name>Fe cation</name>
        <dbReference type="ChEBI" id="CHEBI:24875"/>
    </ligand>
</feature>
<feature type="binding site" evidence="1">
    <location>
        <position position="60"/>
    </location>
    <ligand>
        <name>Fe cation</name>
        <dbReference type="ChEBI" id="CHEBI:24875"/>
    </ligand>
</feature>
<feature type="binding site" evidence="1">
    <location>
        <position position="123"/>
    </location>
    <ligand>
        <name>Fe cation</name>
        <dbReference type="ChEBI" id="CHEBI:24875"/>
    </ligand>
</feature>
<dbReference type="EC" id="4.4.1.21" evidence="1"/>
<dbReference type="EMBL" id="AP006716">
    <property type="protein sequence ID" value="BAE04210.1"/>
    <property type="molecule type" value="Genomic_DNA"/>
</dbReference>
<dbReference type="RefSeq" id="WP_011275212.1">
    <property type="nucleotide sequence ID" value="NC_007168.1"/>
</dbReference>
<dbReference type="SMR" id="Q4L815"/>
<dbReference type="KEGG" id="sha:SH0901"/>
<dbReference type="eggNOG" id="COG1854">
    <property type="taxonomic scope" value="Bacteria"/>
</dbReference>
<dbReference type="HOGENOM" id="CLU_107531_2_0_9"/>
<dbReference type="OrthoDB" id="9788129at2"/>
<dbReference type="Proteomes" id="UP000000543">
    <property type="component" value="Chromosome"/>
</dbReference>
<dbReference type="GO" id="GO:0005506">
    <property type="term" value="F:iron ion binding"/>
    <property type="evidence" value="ECO:0007669"/>
    <property type="project" value="InterPro"/>
</dbReference>
<dbReference type="GO" id="GO:0043768">
    <property type="term" value="F:S-ribosylhomocysteine lyase activity"/>
    <property type="evidence" value="ECO:0007669"/>
    <property type="project" value="UniProtKB-UniRule"/>
</dbReference>
<dbReference type="GO" id="GO:0009372">
    <property type="term" value="P:quorum sensing"/>
    <property type="evidence" value="ECO:0007669"/>
    <property type="project" value="UniProtKB-UniRule"/>
</dbReference>
<dbReference type="Gene3D" id="3.30.1360.80">
    <property type="entry name" value="S-ribosylhomocysteinase (LuxS)"/>
    <property type="match status" value="1"/>
</dbReference>
<dbReference type="HAMAP" id="MF_00091">
    <property type="entry name" value="LuxS"/>
    <property type="match status" value="1"/>
</dbReference>
<dbReference type="InterPro" id="IPR037005">
    <property type="entry name" value="LuxS_sf"/>
</dbReference>
<dbReference type="InterPro" id="IPR011249">
    <property type="entry name" value="Metalloenz_LuxS/M16"/>
</dbReference>
<dbReference type="InterPro" id="IPR003815">
    <property type="entry name" value="S-ribosylhomocysteinase"/>
</dbReference>
<dbReference type="NCBIfam" id="NF002604">
    <property type="entry name" value="PRK02260.1-4"/>
    <property type="match status" value="1"/>
</dbReference>
<dbReference type="PANTHER" id="PTHR35799">
    <property type="entry name" value="S-RIBOSYLHOMOCYSTEINE LYASE"/>
    <property type="match status" value="1"/>
</dbReference>
<dbReference type="PANTHER" id="PTHR35799:SF1">
    <property type="entry name" value="S-RIBOSYLHOMOCYSTEINE LYASE"/>
    <property type="match status" value="1"/>
</dbReference>
<dbReference type="Pfam" id="PF02664">
    <property type="entry name" value="LuxS"/>
    <property type="match status" value="1"/>
</dbReference>
<dbReference type="PIRSF" id="PIRSF006160">
    <property type="entry name" value="AI2"/>
    <property type="match status" value="1"/>
</dbReference>
<dbReference type="PRINTS" id="PR01487">
    <property type="entry name" value="LUXSPROTEIN"/>
</dbReference>
<dbReference type="SUPFAM" id="SSF63411">
    <property type="entry name" value="LuxS/MPP-like metallohydrolase"/>
    <property type="match status" value="1"/>
</dbReference>
<name>LUXS_STAHJ</name>
<protein>
    <recommendedName>
        <fullName evidence="1">S-ribosylhomocysteine lyase</fullName>
        <ecNumber evidence="1">4.4.1.21</ecNumber>
    </recommendedName>
    <alternativeName>
        <fullName evidence="1">AI-2 synthesis protein</fullName>
    </alternativeName>
    <alternativeName>
        <fullName evidence="1">Autoinducer-2 production protein LuxS</fullName>
    </alternativeName>
</protein>
<comment type="function">
    <text evidence="1">Involved in the synthesis of autoinducer 2 (AI-2) which is secreted by bacteria and is used to communicate both the cell density and the metabolic potential of the environment. The regulation of gene expression in response to changes in cell density is called quorum sensing. Catalyzes the transformation of S-ribosylhomocysteine (RHC) to homocysteine (HC) and 4,5-dihydroxy-2,3-pentadione (DPD).</text>
</comment>
<comment type="catalytic activity">
    <reaction evidence="1">
        <text>S-(5-deoxy-D-ribos-5-yl)-L-homocysteine = (S)-4,5-dihydroxypentane-2,3-dione + L-homocysteine</text>
        <dbReference type="Rhea" id="RHEA:17753"/>
        <dbReference type="ChEBI" id="CHEBI:29484"/>
        <dbReference type="ChEBI" id="CHEBI:58195"/>
        <dbReference type="ChEBI" id="CHEBI:58199"/>
        <dbReference type="EC" id="4.4.1.21"/>
    </reaction>
</comment>
<comment type="cofactor">
    <cofactor evidence="1">
        <name>Fe cation</name>
        <dbReference type="ChEBI" id="CHEBI:24875"/>
    </cofactor>
    <text evidence="1">Binds 1 Fe cation per subunit.</text>
</comment>
<comment type="subunit">
    <text evidence="1">Homodimer.</text>
</comment>
<comment type="similarity">
    <text evidence="1">Belongs to the LuxS family.</text>
</comment>